<name>GRC10_ARATH</name>
<accession>Q29PZ1</accession>
<accession>C1JGR0</accession>
<accession>Q9LYI0</accession>
<keyword id="KW-0963">Cytoplasm</keyword>
<keyword id="KW-1015">Disulfide bond</keyword>
<keyword id="KW-0249">Electron transport</keyword>
<keyword id="KW-0676">Redox-active center</keyword>
<keyword id="KW-1185">Reference proteome</keyword>
<keyword id="KW-0813">Transport</keyword>
<sequence length="148" mass="15709">MKTMRGLRNCSNDAVTLDLTVHPPPPPPLPPPAPSTVSSSTASTSLSFDEEETSESKIGRLISEHPVIIFTRFSSCCMCHVMKKLLSTVGVHPTVIEIDDGEIAYLAVEAAPVLFIGGTCVGGFESLVALHLSGQLIPRLVEVGALWA</sequence>
<feature type="chain" id="PRO_0000268717" description="Glutaredoxin-C10">
    <location>
        <begin position="1"/>
        <end position="148"/>
    </location>
</feature>
<feature type="domain" description="Glutaredoxin" evidence="2">
    <location>
        <begin position="55"/>
        <end position="147"/>
    </location>
</feature>
<feature type="region of interest" description="Disordered" evidence="3">
    <location>
        <begin position="16"/>
        <end position="55"/>
    </location>
</feature>
<feature type="compositionally biased region" description="Pro residues" evidence="3">
    <location>
        <begin position="22"/>
        <end position="34"/>
    </location>
</feature>
<feature type="compositionally biased region" description="Low complexity" evidence="3">
    <location>
        <begin position="35"/>
        <end position="47"/>
    </location>
</feature>
<feature type="disulfide bond" description="Redox-active" evidence="1">
    <location>
        <begin position="76"/>
        <end position="79"/>
    </location>
</feature>
<protein>
    <recommendedName>
        <fullName>Glutaredoxin-C10</fullName>
        <shortName>AtGrxC10</shortName>
    </recommendedName>
    <alternativeName>
        <fullName>Protein ROXY 20</fullName>
    </alternativeName>
</protein>
<gene>
    <name type="primary">GRXC10</name>
    <name type="synonym">ROXY20</name>
    <name type="ordered locus">At5g11930</name>
    <name type="ORF">F14F18.100</name>
</gene>
<reference key="1">
    <citation type="journal article" date="2009" name="Plant Cell">
        <title>Nuclear activity of ROXY1, a glutaredoxin interacting with TGA factors, is required for petal development in Arabidopsis thaliana.</title>
        <authorList>
            <person name="Li S."/>
            <person name="Lauri A."/>
            <person name="Ziemann M."/>
            <person name="Busch A."/>
            <person name="Bhave M."/>
            <person name="Zachgo S."/>
        </authorList>
    </citation>
    <scope>NUCLEOTIDE SEQUENCE [MRNA]</scope>
    <scope>GENE FAMILY</scope>
</reference>
<reference key="2">
    <citation type="journal article" date="2000" name="Nature">
        <title>Sequence and analysis of chromosome 5 of the plant Arabidopsis thaliana.</title>
        <authorList>
            <person name="Tabata S."/>
            <person name="Kaneko T."/>
            <person name="Nakamura Y."/>
            <person name="Kotani H."/>
            <person name="Kato T."/>
            <person name="Asamizu E."/>
            <person name="Miyajima N."/>
            <person name="Sasamoto S."/>
            <person name="Kimura T."/>
            <person name="Hosouchi T."/>
            <person name="Kawashima K."/>
            <person name="Kohara M."/>
            <person name="Matsumoto M."/>
            <person name="Matsuno A."/>
            <person name="Muraki A."/>
            <person name="Nakayama S."/>
            <person name="Nakazaki N."/>
            <person name="Naruo K."/>
            <person name="Okumura S."/>
            <person name="Shinpo S."/>
            <person name="Takeuchi C."/>
            <person name="Wada T."/>
            <person name="Watanabe A."/>
            <person name="Yamada M."/>
            <person name="Yasuda M."/>
            <person name="Sato S."/>
            <person name="de la Bastide M."/>
            <person name="Huang E."/>
            <person name="Spiegel L."/>
            <person name="Gnoj L."/>
            <person name="O'Shaughnessy A."/>
            <person name="Preston R."/>
            <person name="Habermann K."/>
            <person name="Murray J."/>
            <person name="Johnson D."/>
            <person name="Rohlfing T."/>
            <person name="Nelson J."/>
            <person name="Stoneking T."/>
            <person name="Pepin K."/>
            <person name="Spieth J."/>
            <person name="Sekhon M."/>
            <person name="Armstrong J."/>
            <person name="Becker M."/>
            <person name="Belter E."/>
            <person name="Cordum H."/>
            <person name="Cordes M."/>
            <person name="Courtney L."/>
            <person name="Courtney W."/>
            <person name="Dante M."/>
            <person name="Du H."/>
            <person name="Edwards J."/>
            <person name="Fryman J."/>
            <person name="Haakensen B."/>
            <person name="Lamar E."/>
            <person name="Latreille P."/>
            <person name="Leonard S."/>
            <person name="Meyer R."/>
            <person name="Mulvaney E."/>
            <person name="Ozersky P."/>
            <person name="Riley A."/>
            <person name="Strowmatt C."/>
            <person name="Wagner-McPherson C."/>
            <person name="Wollam A."/>
            <person name="Yoakum M."/>
            <person name="Bell M."/>
            <person name="Dedhia N."/>
            <person name="Parnell L."/>
            <person name="Shah R."/>
            <person name="Rodriguez M."/>
            <person name="Hoon See L."/>
            <person name="Vil D."/>
            <person name="Baker J."/>
            <person name="Kirchoff K."/>
            <person name="Toth K."/>
            <person name="King L."/>
            <person name="Bahret A."/>
            <person name="Miller B."/>
            <person name="Marra M.A."/>
            <person name="Martienssen R."/>
            <person name="McCombie W.R."/>
            <person name="Wilson R.K."/>
            <person name="Murphy G."/>
            <person name="Bancroft I."/>
            <person name="Volckaert G."/>
            <person name="Wambutt R."/>
            <person name="Duesterhoeft A."/>
            <person name="Stiekema W."/>
            <person name="Pohl T."/>
            <person name="Entian K.-D."/>
            <person name="Terryn N."/>
            <person name="Hartley N."/>
            <person name="Bent E."/>
            <person name="Johnson S."/>
            <person name="Langham S.-A."/>
            <person name="McCullagh B."/>
            <person name="Robben J."/>
            <person name="Grymonprez B."/>
            <person name="Zimmermann W."/>
            <person name="Ramsperger U."/>
            <person name="Wedler H."/>
            <person name="Balke K."/>
            <person name="Wedler E."/>
            <person name="Peters S."/>
            <person name="van Staveren M."/>
            <person name="Dirkse W."/>
            <person name="Mooijman P."/>
            <person name="Klein Lankhorst R."/>
            <person name="Weitzenegger T."/>
            <person name="Bothe G."/>
            <person name="Rose M."/>
            <person name="Hauf J."/>
            <person name="Berneiser S."/>
            <person name="Hempel S."/>
            <person name="Feldpausch M."/>
            <person name="Lamberth S."/>
            <person name="Villarroel R."/>
            <person name="Gielen J."/>
            <person name="Ardiles W."/>
            <person name="Bents O."/>
            <person name="Lemcke K."/>
            <person name="Kolesov G."/>
            <person name="Mayer K.F.X."/>
            <person name="Rudd S."/>
            <person name="Schoof H."/>
            <person name="Schueller C."/>
            <person name="Zaccaria P."/>
            <person name="Mewes H.-W."/>
            <person name="Bevan M."/>
            <person name="Fransz P.F."/>
        </authorList>
    </citation>
    <scope>NUCLEOTIDE SEQUENCE [LARGE SCALE GENOMIC DNA]</scope>
    <source>
        <strain>cv. Columbia</strain>
    </source>
</reference>
<reference key="3">
    <citation type="journal article" date="2017" name="Plant J.">
        <title>Araport11: a complete reannotation of the Arabidopsis thaliana reference genome.</title>
        <authorList>
            <person name="Cheng C.Y."/>
            <person name="Krishnakumar V."/>
            <person name="Chan A.P."/>
            <person name="Thibaud-Nissen F."/>
            <person name="Schobel S."/>
            <person name="Town C.D."/>
        </authorList>
    </citation>
    <scope>GENOME REANNOTATION</scope>
    <source>
        <strain>cv. Columbia</strain>
    </source>
</reference>
<reference key="4">
    <citation type="submission" date="2006-03" db="EMBL/GenBank/DDBJ databases">
        <title>Arabidopsis ORF clones.</title>
        <authorList>
            <person name="Shinn P."/>
            <person name="Chen H."/>
            <person name="Kim C.J."/>
            <person name="Ecker J.R."/>
        </authorList>
    </citation>
    <scope>NUCLEOTIDE SEQUENCE [LARGE SCALE MRNA]</scope>
    <source>
        <strain>cv. Columbia</strain>
    </source>
</reference>
<reference key="5">
    <citation type="journal article" date="2004" name="Cell. Mol. Life Sci.">
        <title>Plant glutaredoxins: still mysterious reducing systems.</title>
        <authorList>
            <person name="Rouhier N."/>
            <person name="Gelhaye E."/>
            <person name="Jacquot J.-P."/>
        </authorList>
    </citation>
    <scope>GENE FAMILY</scope>
    <scope>NOMENCLATURE</scope>
</reference>
<reference key="6">
    <citation type="journal article" date="2006" name="J. Exp. Bot.">
        <title>Genome-wide analysis of plant glutaredoxin systems.</title>
        <authorList>
            <person name="Rouhier N."/>
            <person name="Couturier J."/>
            <person name="Jacquot J.-P."/>
        </authorList>
    </citation>
    <scope>GENE FAMILY</scope>
</reference>
<organism>
    <name type="scientific">Arabidopsis thaliana</name>
    <name type="common">Mouse-ear cress</name>
    <dbReference type="NCBI Taxonomy" id="3702"/>
    <lineage>
        <taxon>Eukaryota</taxon>
        <taxon>Viridiplantae</taxon>
        <taxon>Streptophyta</taxon>
        <taxon>Embryophyta</taxon>
        <taxon>Tracheophyta</taxon>
        <taxon>Spermatophyta</taxon>
        <taxon>Magnoliopsida</taxon>
        <taxon>eudicotyledons</taxon>
        <taxon>Gunneridae</taxon>
        <taxon>Pentapetalae</taxon>
        <taxon>rosids</taxon>
        <taxon>malvids</taxon>
        <taxon>Brassicales</taxon>
        <taxon>Brassicaceae</taxon>
        <taxon>Camelineae</taxon>
        <taxon>Arabidopsis</taxon>
    </lineage>
</organism>
<evidence type="ECO:0000250" key="1"/>
<evidence type="ECO:0000255" key="2">
    <source>
        <dbReference type="PROSITE-ProRule" id="PRU00686"/>
    </source>
</evidence>
<evidence type="ECO:0000256" key="3">
    <source>
        <dbReference type="SAM" id="MobiDB-lite"/>
    </source>
</evidence>
<evidence type="ECO:0000305" key="4"/>
<comment type="function">
    <text evidence="1">Has a glutathione-disulfide oxidoreductase activity in the presence of NADPH and glutathione reductase. Reduces low molecular weight disulfides and proteins (By similarity).</text>
</comment>
<comment type="subcellular location">
    <subcellularLocation>
        <location evidence="1">Cytoplasm</location>
    </subcellularLocation>
</comment>
<comment type="similarity">
    <text evidence="4">Belongs to the glutaredoxin family. CC-type subfamily.</text>
</comment>
<comment type="sequence caution" evidence="4">
    <conflict type="erroneous initiation">
        <sequence resource="EMBL-CDS" id="CAB87666"/>
    </conflict>
</comment>
<proteinExistence type="evidence at transcript level"/>
<dbReference type="EMBL" id="FJ611919">
    <property type="protein sequence ID" value="ACO50424.1"/>
    <property type="molecule type" value="mRNA"/>
</dbReference>
<dbReference type="EMBL" id="AL163812">
    <property type="protein sequence ID" value="CAB87666.1"/>
    <property type="status" value="ALT_INIT"/>
    <property type="molecule type" value="Genomic_DNA"/>
</dbReference>
<dbReference type="EMBL" id="CP002688">
    <property type="protein sequence ID" value="AED91741.1"/>
    <property type="molecule type" value="Genomic_DNA"/>
</dbReference>
<dbReference type="EMBL" id="BT024765">
    <property type="protein sequence ID" value="ABD59103.1"/>
    <property type="molecule type" value="mRNA"/>
</dbReference>
<dbReference type="PIR" id="T48552">
    <property type="entry name" value="T48552"/>
</dbReference>
<dbReference type="RefSeq" id="NP_196754.2">
    <property type="nucleotide sequence ID" value="NM_121231.3"/>
</dbReference>
<dbReference type="SMR" id="Q29PZ1"/>
<dbReference type="BioGRID" id="16344">
    <property type="interactions" value="1"/>
</dbReference>
<dbReference type="FunCoup" id="Q29PZ1">
    <property type="interactions" value="23"/>
</dbReference>
<dbReference type="STRING" id="3702.Q29PZ1"/>
<dbReference type="PaxDb" id="3702-AT5G11930.1"/>
<dbReference type="EnsemblPlants" id="AT5G11930.1">
    <property type="protein sequence ID" value="AT5G11930.1"/>
    <property type="gene ID" value="AT5G11930"/>
</dbReference>
<dbReference type="GeneID" id="831066"/>
<dbReference type="Gramene" id="AT5G11930.1">
    <property type="protein sequence ID" value="AT5G11930.1"/>
    <property type="gene ID" value="AT5G11930"/>
</dbReference>
<dbReference type="KEGG" id="ath:AT5G11930"/>
<dbReference type="Araport" id="AT5G11930"/>
<dbReference type="TAIR" id="AT5G11930">
    <property type="gene designation" value="ROXY20"/>
</dbReference>
<dbReference type="eggNOG" id="KOG1752">
    <property type="taxonomic scope" value="Eukaryota"/>
</dbReference>
<dbReference type="HOGENOM" id="CLU_026126_6_2_1"/>
<dbReference type="InParanoid" id="Q29PZ1"/>
<dbReference type="OMA" id="MPAMYIG"/>
<dbReference type="OrthoDB" id="418495at2759"/>
<dbReference type="PhylomeDB" id="Q29PZ1"/>
<dbReference type="PRO" id="PR:Q29PZ1"/>
<dbReference type="Proteomes" id="UP000006548">
    <property type="component" value="Chromosome 5"/>
</dbReference>
<dbReference type="ExpressionAtlas" id="Q29PZ1">
    <property type="expression patterns" value="baseline and differential"/>
</dbReference>
<dbReference type="GO" id="GO:0005737">
    <property type="term" value="C:cytoplasm"/>
    <property type="evidence" value="ECO:0007669"/>
    <property type="project" value="UniProtKB-SubCell"/>
</dbReference>
<dbReference type="Gene3D" id="3.40.30.10">
    <property type="entry name" value="Glutaredoxin"/>
    <property type="match status" value="1"/>
</dbReference>
<dbReference type="InterPro" id="IPR011905">
    <property type="entry name" value="GlrX-like_pln_2"/>
</dbReference>
<dbReference type="InterPro" id="IPR002109">
    <property type="entry name" value="Glutaredoxin"/>
</dbReference>
<dbReference type="InterPro" id="IPR036249">
    <property type="entry name" value="Thioredoxin-like_sf"/>
</dbReference>
<dbReference type="NCBIfam" id="TIGR02189">
    <property type="entry name" value="GlrX-like_plant"/>
    <property type="match status" value="1"/>
</dbReference>
<dbReference type="PANTHER" id="PTHR10168">
    <property type="entry name" value="GLUTAREDOXIN"/>
    <property type="match status" value="1"/>
</dbReference>
<dbReference type="Pfam" id="PF00462">
    <property type="entry name" value="Glutaredoxin"/>
    <property type="match status" value="1"/>
</dbReference>
<dbReference type="SUPFAM" id="SSF52833">
    <property type="entry name" value="Thioredoxin-like"/>
    <property type="match status" value="1"/>
</dbReference>
<dbReference type="PROSITE" id="PS51354">
    <property type="entry name" value="GLUTAREDOXIN_2"/>
    <property type="match status" value="1"/>
</dbReference>